<feature type="chain" id="PRO_1000011840" description="Diaminopimelate epimerase">
    <location>
        <begin position="1"/>
        <end position="288"/>
    </location>
</feature>
<feature type="active site" description="Proton donor" evidence="1">
    <location>
        <position position="76"/>
    </location>
</feature>
<feature type="active site" description="Proton acceptor" evidence="1">
    <location>
        <position position="226"/>
    </location>
</feature>
<feature type="binding site" evidence="1">
    <location>
        <position position="14"/>
    </location>
    <ligand>
        <name>substrate</name>
    </ligand>
</feature>
<feature type="binding site" evidence="1">
    <location>
        <position position="67"/>
    </location>
    <ligand>
        <name>substrate</name>
    </ligand>
</feature>
<feature type="binding site" evidence="1">
    <location>
        <begin position="77"/>
        <end position="78"/>
    </location>
    <ligand>
        <name>substrate</name>
    </ligand>
</feature>
<feature type="binding site" evidence="1">
    <location>
        <position position="166"/>
    </location>
    <ligand>
        <name>substrate</name>
    </ligand>
</feature>
<feature type="binding site" evidence="1">
    <location>
        <position position="199"/>
    </location>
    <ligand>
        <name>substrate</name>
    </ligand>
</feature>
<feature type="binding site" evidence="1">
    <location>
        <begin position="217"/>
        <end position="218"/>
    </location>
    <ligand>
        <name>substrate</name>
    </ligand>
</feature>
<feature type="binding site" evidence="1">
    <location>
        <begin position="227"/>
        <end position="228"/>
    </location>
    <ligand>
        <name>substrate</name>
    </ligand>
</feature>
<feature type="site" description="Could be important to modulate the pK values of the two catalytic cysteine residues" evidence="1">
    <location>
        <position position="168"/>
    </location>
</feature>
<feature type="site" description="Could be important to modulate the pK values of the two catalytic cysteine residues" evidence="1">
    <location>
        <position position="217"/>
    </location>
</feature>
<accession>Q632C7</accession>
<reference key="1">
    <citation type="journal article" date="2006" name="J. Bacteriol.">
        <title>Pathogenomic sequence analysis of Bacillus cereus and Bacillus thuringiensis isolates closely related to Bacillus anthracis.</title>
        <authorList>
            <person name="Han C.S."/>
            <person name="Xie G."/>
            <person name="Challacombe J.F."/>
            <person name="Altherr M.R."/>
            <person name="Bhotika S.S."/>
            <person name="Bruce D."/>
            <person name="Campbell C.S."/>
            <person name="Campbell M.L."/>
            <person name="Chen J."/>
            <person name="Chertkov O."/>
            <person name="Cleland C."/>
            <person name="Dimitrijevic M."/>
            <person name="Doggett N.A."/>
            <person name="Fawcett J.J."/>
            <person name="Glavina T."/>
            <person name="Goodwin L.A."/>
            <person name="Hill K.K."/>
            <person name="Hitchcock P."/>
            <person name="Jackson P.J."/>
            <person name="Keim P."/>
            <person name="Kewalramani A.R."/>
            <person name="Longmire J."/>
            <person name="Lucas S."/>
            <person name="Malfatti S."/>
            <person name="McMurry K."/>
            <person name="Meincke L.J."/>
            <person name="Misra M."/>
            <person name="Moseman B.L."/>
            <person name="Mundt M."/>
            <person name="Munk A.C."/>
            <person name="Okinaka R.T."/>
            <person name="Parson-Quintana B."/>
            <person name="Reilly L.P."/>
            <person name="Richardson P."/>
            <person name="Robinson D.L."/>
            <person name="Rubin E."/>
            <person name="Saunders E."/>
            <person name="Tapia R."/>
            <person name="Tesmer J.G."/>
            <person name="Thayer N."/>
            <person name="Thompson L.S."/>
            <person name="Tice H."/>
            <person name="Ticknor L.O."/>
            <person name="Wills P.L."/>
            <person name="Brettin T.S."/>
            <person name="Gilna P."/>
        </authorList>
    </citation>
    <scope>NUCLEOTIDE SEQUENCE [LARGE SCALE GENOMIC DNA]</scope>
    <source>
        <strain>ZK / E33L</strain>
    </source>
</reference>
<name>DAPF_BACCZ</name>
<keyword id="KW-0028">Amino-acid biosynthesis</keyword>
<keyword id="KW-0963">Cytoplasm</keyword>
<keyword id="KW-0413">Isomerase</keyword>
<keyword id="KW-0457">Lysine biosynthesis</keyword>
<dbReference type="EC" id="5.1.1.7" evidence="1"/>
<dbReference type="EMBL" id="CP000001">
    <property type="protein sequence ID" value="AAU15609.1"/>
    <property type="molecule type" value="Genomic_DNA"/>
</dbReference>
<dbReference type="RefSeq" id="WP_000077386.1">
    <property type="nucleotide sequence ID" value="NZ_CP009968.1"/>
</dbReference>
<dbReference type="SMR" id="Q632C7"/>
<dbReference type="GeneID" id="93006147"/>
<dbReference type="KEGG" id="bcz:BCE33L4667"/>
<dbReference type="PATRIC" id="fig|288681.22.peg.691"/>
<dbReference type="UniPathway" id="UPA00034">
    <property type="reaction ID" value="UER00025"/>
</dbReference>
<dbReference type="Proteomes" id="UP000002612">
    <property type="component" value="Chromosome"/>
</dbReference>
<dbReference type="GO" id="GO:0005829">
    <property type="term" value="C:cytosol"/>
    <property type="evidence" value="ECO:0007669"/>
    <property type="project" value="TreeGrafter"/>
</dbReference>
<dbReference type="GO" id="GO:0008837">
    <property type="term" value="F:diaminopimelate epimerase activity"/>
    <property type="evidence" value="ECO:0007669"/>
    <property type="project" value="UniProtKB-UniRule"/>
</dbReference>
<dbReference type="GO" id="GO:0009089">
    <property type="term" value="P:lysine biosynthetic process via diaminopimelate"/>
    <property type="evidence" value="ECO:0007669"/>
    <property type="project" value="UniProtKB-UniRule"/>
</dbReference>
<dbReference type="FunFam" id="3.10.310.10:FF:000004">
    <property type="entry name" value="Diaminopimelate epimerase"/>
    <property type="match status" value="1"/>
</dbReference>
<dbReference type="FunFam" id="3.10.310.10:FF:000006">
    <property type="entry name" value="Diaminopimelate epimerase"/>
    <property type="match status" value="1"/>
</dbReference>
<dbReference type="Gene3D" id="3.10.310.10">
    <property type="entry name" value="Diaminopimelate Epimerase, Chain A, domain 1"/>
    <property type="match status" value="2"/>
</dbReference>
<dbReference type="HAMAP" id="MF_00197">
    <property type="entry name" value="DAP_epimerase"/>
    <property type="match status" value="1"/>
</dbReference>
<dbReference type="InterPro" id="IPR018510">
    <property type="entry name" value="DAP_epimerase_AS"/>
</dbReference>
<dbReference type="InterPro" id="IPR001653">
    <property type="entry name" value="DAP_epimerase_DapF"/>
</dbReference>
<dbReference type="NCBIfam" id="TIGR00652">
    <property type="entry name" value="DapF"/>
    <property type="match status" value="1"/>
</dbReference>
<dbReference type="PANTHER" id="PTHR31689:SF0">
    <property type="entry name" value="DIAMINOPIMELATE EPIMERASE"/>
    <property type="match status" value="1"/>
</dbReference>
<dbReference type="PANTHER" id="PTHR31689">
    <property type="entry name" value="DIAMINOPIMELATE EPIMERASE, CHLOROPLASTIC"/>
    <property type="match status" value="1"/>
</dbReference>
<dbReference type="Pfam" id="PF01678">
    <property type="entry name" value="DAP_epimerase"/>
    <property type="match status" value="2"/>
</dbReference>
<dbReference type="SUPFAM" id="SSF54506">
    <property type="entry name" value="Diaminopimelate epimerase-like"/>
    <property type="match status" value="1"/>
</dbReference>
<dbReference type="PROSITE" id="PS01326">
    <property type="entry name" value="DAP_EPIMERASE"/>
    <property type="match status" value="1"/>
</dbReference>
<gene>
    <name evidence="1" type="primary">dapF</name>
    <name type="ordered locus">BCE33L4667</name>
</gene>
<comment type="function">
    <text evidence="1">Catalyzes the stereoinversion of LL-2,6-diaminopimelate (L,L-DAP) to meso-diaminopimelate (meso-DAP), a precursor of L-lysine and an essential component of the bacterial peptidoglycan.</text>
</comment>
<comment type="catalytic activity">
    <reaction evidence="1">
        <text>(2S,6S)-2,6-diaminopimelate = meso-2,6-diaminopimelate</text>
        <dbReference type="Rhea" id="RHEA:15393"/>
        <dbReference type="ChEBI" id="CHEBI:57609"/>
        <dbReference type="ChEBI" id="CHEBI:57791"/>
        <dbReference type="EC" id="5.1.1.7"/>
    </reaction>
</comment>
<comment type="pathway">
    <text evidence="1">Amino-acid biosynthesis; L-lysine biosynthesis via DAP pathway; DL-2,6-diaminopimelate from LL-2,6-diaminopimelate: step 1/1.</text>
</comment>
<comment type="subunit">
    <text evidence="1">Homodimer.</text>
</comment>
<comment type="subcellular location">
    <subcellularLocation>
        <location evidence="1">Cytoplasm</location>
    </subcellularLocation>
</comment>
<comment type="similarity">
    <text evidence="1">Belongs to the diaminopimelate epimerase family.</text>
</comment>
<protein>
    <recommendedName>
        <fullName evidence="1">Diaminopimelate epimerase</fullName>
        <shortName evidence="1">DAP epimerase</shortName>
        <ecNumber evidence="1">5.1.1.7</ecNumber>
    </recommendedName>
    <alternativeName>
        <fullName evidence="1">PLP-independent amino acid racemase</fullName>
    </alternativeName>
</protein>
<organism>
    <name type="scientific">Bacillus cereus (strain ZK / E33L)</name>
    <dbReference type="NCBI Taxonomy" id="288681"/>
    <lineage>
        <taxon>Bacteria</taxon>
        <taxon>Bacillati</taxon>
        <taxon>Bacillota</taxon>
        <taxon>Bacilli</taxon>
        <taxon>Bacillales</taxon>
        <taxon>Bacillaceae</taxon>
        <taxon>Bacillus</taxon>
        <taxon>Bacillus cereus group</taxon>
    </lineage>
</organism>
<sequence>MSQFSFTKMHGLGNSYIYVNMFEEQIPEEDLALVAEKVSNINTGIGADGMILICPSDVAPVKMRMFNNDGSEGKSCGNGLRCVAKYAYEHKLVEDTVFTIETLAGIVTAEVTVEEGKVTLAKIDMGAPRLTRAEIPMLGEGETPFIRENFLYNNHRYAFTAVSMGNPHAVIFVDDVEQAPLTTLGPVLETHEMFPERVNVEFIEILNEEEMNFRVWERGSGVTQACGTGACAAVVASILNGKMERGKEITVHLAGGDLMIAWTEEGNVLMKGPAEVICRGVYEYKIEA</sequence>
<proteinExistence type="inferred from homology"/>
<evidence type="ECO:0000255" key="1">
    <source>
        <dbReference type="HAMAP-Rule" id="MF_00197"/>
    </source>
</evidence>